<name>TRHO_PROMP</name>
<keyword id="KW-0560">Oxidoreductase</keyword>
<keyword id="KW-0819">tRNA processing</keyword>
<comment type="function">
    <text evidence="1">Catalyzes oxygen-dependent 5-hydroxyuridine (ho5U) modification at position 34 in tRNAs.</text>
</comment>
<comment type="catalytic activity">
    <reaction evidence="1">
        <text>uridine(34) in tRNA + AH2 + O2 = 5-hydroxyuridine(34) in tRNA + A + H2O</text>
        <dbReference type="Rhea" id="RHEA:64224"/>
        <dbReference type="Rhea" id="RHEA-COMP:11727"/>
        <dbReference type="Rhea" id="RHEA-COMP:13381"/>
        <dbReference type="ChEBI" id="CHEBI:13193"/>
        <dbReference type="ChEBI" id="CHEBI:15377"/>
        <dbReference type="ChEBI" id="CHEBI:15379"/>
        <dbReference type="ChEBI" id="CHEBI:17499"/>
        <dbReference type="ChEBI" id="CHEBI:65315"/>
        <dbReference type="ChEBI" id="CHEBI:136877"/>
    </reaction>
</comment>
<comment type="similarity">
    <text evidence="1">Belongs to the TrhO family.</text>
</comment>
<gene>
    <name evidence="1" type="primary">trhO</name>
    <name type="ordered locus">PMM1094</name>
</gene>
<protein>
    <recommendedName>
        <fullName evidence="1">tRNA uridine(34) hydroxylase</fullName>
        <ecNumber evidence="1">1.14.-.-</ecNumber>
    </recommendedName>
    <alternativeName>
        <fullName evidence="1">tRNA hydroxylation protein O</fullName>
    </alternativeName>
</protein>
<dbReference type="EC" id="1.14.-.-" evidence="1"/>
<dbReference type="EMBL" id="BX548174">
    <property type="protein sequence ID" value="CAE19553.1"/>
    <property type="molecule type" value="Genomic_DNA"/>
</dbReference>
<dbReference type="RefSeq" id="WP_011132727.1">
    <property type="nucleotide sequence ID" value="NC_005072.1"/>
</dbReference>
<dbReference type="SMR" id="Q7V100"/>
<dbReference type="STRING" id="59919.PMM1094"/>
<dbReference type="KEGG" id="pmm:PMM1094"/>
<dbReference type="eggNOG" id="COG1054">
    <property type="taxonomic scope" value="Bacteria"/>
</dbReference>
<dbReference type="HOGENOM" id="CLU_038878_0_0_3"/>
<dbReference type="OrthoDB" id="9778326at2"/>
<dbReference type="Proteomes" id="UP000001026">
    <property type="component" value="Chromosome"/>
</dbReference>
<dbReference type="GO" id="GO:0016705">
    <property type="term" value="F:oxidoreductase activity, acting on paired donors, with incorporation or reduction of molecular oxygen"/>
    <property type="evidence" value="ECO:0007669"/>
    <property type="project" value="UniProtKB-UniRule"/>
</dbReference>
<dbReference type="GO" id="GO:0006400">
    <property type="term" value="P:tRNA modification"/>
    <property type="evidence" value="ECO:0007669"/>
    <property type="project" value="UniProtKB-UniRule"/>
</dbReference>
<dbReference type="CDD" id="cd01518">
    <property type="entry name" value="RHOD_YceA"/>
    <property type="match status" value="1"/>
</dbReference>
<dbReference type="Gene3D" id="3.30.70.100">
    <property type="match status" value="1"/>
</dbReference>
<dbReference type="Gene3D" id="3.40.250.10">
    <property type="entry name" value="Rhodanese-like domain"/>
    <property type="match status" value="1"/>
</dbReference>
<dbReference type="HAMAP" id="MF_00469">
    <property type="entry name" value="TrhO"/>
    <property type="match status" value="1"/>
</dbReference>
<dbReference type="InterPro" id="IPR001763">
    <property type="entry name" value="Rhodanese-like_dom"/>
</dbReference>
<dbReference type="InterPro" id="IPR036873">
    <property type="entry name" value="Rhodanese-like_dom_sf"/>
</dbReference>
<dbReference type="InterPro" id="IPR020936">
    <property type="entry name" value="TrhO"/>
</dbReference>
<dbReference type="InterPro" id="IPR040503">
    <property type="entry name" value="TRHO_N"/>
</dbReference>
<dbReference type="NCBIfam" id="NF001136">
    <property type="entry name" value="PRK00142.1-4"/>
    <property type="match status" value="1"/>
</dbReference>
<dbReference type="PANTHER" id="PTHR43268:SF3">
    <property type="entry name" value="RHODANESE-LIKE DOMAIN-CONTAINING PROTEIN 7-RELATED"/>
    <property type="match status" value="1"/>
</dbReference>
<dbReference type="PANTHER" id="PTHR43268">
    <property type="entry name" value="THIOSULFATE SULFURTRANSFERASE/RHODANESE-LIKE DOMAIN-CONTAINING PROTEIN 2"/>
    <property type="match status" value="1"/>
</dbReference>
<dbReference type="Pfam" id="PF00581">
    <property type="entry name" value="Rhodanese"/>
    <property type="match status" value="1"/>
</dbReference>
<dbReference type="Pfam" id="PF17773">
    <property type="entry name" value="UPF0176_N"/>
    <property type="match status" value="1"/>
</dbReference>
<dbReference type="SMART" id="SM00450">
    <property type="entry name" value="RHOD"/>
    <property type="match status" value="1"/>
</dbReference>
<dbReference type="SUPFAM" id="SSF52821">
    <property type="entry name" value="Rhodanese/Cell cycle control phosphatase"/>
    <property type="match status" value="1"/>
</dbReference>
<dbReference type="PROSITE" id="PS50206">
    <property type="entry name" value="RHODANESE_3"/>
    <property type="match status" value="1"/>
</dbReference>
<sequence length="310" mass="35731">MSNNIYKIVSLYSFFSFQENSIIELKENLFSIEKNNDLSGLLIIAREGLNGTVCAEEGIIENILKLIKNIVGNNKLNIKVSYSKKKIFKKLKIKIKDEIVTMGVPEINPSEDSGTYIDSFSWNKLIKDKNTIVVDTRNHYEVSIGSFKKSINPNTENFSEFPEWVDDNLGKYIGDDDSKNIAMFCTGGIRCEKATSLLKKKGYKNIFHLQGGILKYLEDMSKEESLFEGECFVFDKRVALDHELKQGSYSICHACGMPISIEDQKNKEYREGIQCHFCVNKFSDNDRKRFEERQKQINKLKDKNQKVYKD</sequence>
<accession>Q7V100</accession>
<evidence type="ECO:0000255" key="1">
    <source>
        <dbReference type="HAMAP-Rule" id="MF_00469"/>
    </source>
</evidence>
<proteinExistence type="inferred from homology"/>
<organism>
    <name type="scientific">Prochlorococcus marinus subsp. pastoris (strain CCMP1986 / NIES-2087 / MED4)</name>
    <dbReference type="NCBI Taxonomy" id="59919"/>
    <lineage>
        <taxon>Bacteria</taxon>
        <taxon>Bacillati</taxon>
        <taxon>Cyanobacteriota</taxon>
        <taxon>Cyanophyceae</taxon>
        <taxon>Synechococcales</taxon>
        <taxon>Prochlorococcaceae</taxon>
        <taxon>Prochlorococcus</taxon>
    </lineage>
</organism>
<feature type="chain" id="PRO_0000161496" description="tRNA uridine(34) hydroxylase">
    <location>
        <begin position="1"/>
        <end position="310"/>
    </location>
</feature>
<feature type="domain" description="Rhodanese" evidence="1">
    <location>
        <begin position="127"/>
        <end position="225"/>
    </location>
</feature>
<feature type="active site" description="Cysteine persulfide intermediate" evidence="1">
    <location>
        <position position="185"/>
    </location>
</feature>
<reference key="1">
    <citation type="journal article" date="2003" name="Nature">
        <title>Genome divergence in two Prochlorococcus ecotypes reflects oceanic niche differentiation.</title>
        <authorList>
            <person name="Rocap G."/>
            <person name="Larimer F.W."/>
            <person name="Lamerdin J.E."/>
            <person name="Malfatti S."/>
            <person name="Chain P."/>
            <person name="Ahlgren N.A."/>
            <person name="Arellano A."/>
            <person name="Coleman M."/>
            <person name="Hauser L."/>
            <person name="Hess W.R."/>
            <person name="Johnson Z.I."/>
            <person name="Land M.L."/>
            <person name="Lindell D."/>
            <person name="Post A.F."/>
            <person name="Regala W."/>
            <person name="Shah M."/>
            <person name="Shaw S.L."/>
            <person name="Steglich C."/>
            <person name="Sullivan M.B."/>
            <person name="Ting C.S."/>
            <person name="Tolonen A."/>
            <person name="Webb E.A."/>
            <person name="Zinser E.R."/>
            <person name="Chisholm S.W."/>
        </authorList>
    </citation>
    <scope>NUCLEOTIDE SEQUENCE [LARGE SCALE GENOMIC DNA]</scope>
    <source>
        <strain>CCMP1986 / NIES-2087 / MED4</strain>
    </source>
</reference>